<dbReference type="EC" id="2.8.1.8" evidence="1"/>
<dbReference type="EMBL" id="AE015925">
    <property type="protein sequence ID" value="AAP05673.1"/>
    <property type="molecule type" value="Genomic_DNA"/>
</dbReference>
<dbReference type="RefSeq" id="WP_011006886.1">
    <property type="nucleotide sequence ID" value="NC_003361.3"/>
</dbReference>
<dbReference type="SMR" id="Q821K6"/>
<dbReference type="STRING" id="227941.CCA_00934"/>
<dbReference type="KEGG" id="cca:CCA_00934"/>
<dbReference type="eggNOG" id="COG0320">
    <property type="taxonomic scope" value="Bacteria"/>
</dbReference>
<dbReference type="HOGENOM" id="CLU_033144_2_1_0"/>
<dbReference type="OrthoDB" id="9787898at2"/>
<dbReference type="UniPathway" id="UPA00538">
    <property type="reaction ID" value="UER00593"/>
</dbReference>
<dbReference type="Proteomes" id="UP000002193">
    <property type="component" value="Chromosome"/>
</dbReference>
<dbReference type="GO" id="GO:0005737">
    <property type="term" value="C:cytoplasm"/>
    <property type="evidence" value="ECO:0007669"/>
    <property type="project" value="UniProtKB-SubCell"/>
</dbReference>
<dbReference type="GO" id="GO:0051539">
    <property type="term" value="F:4 iron, 4 sulfur cluster binding"/>
    <property type="evidence" value="ECO:0007669"/>
    <property type="project" value="UniProtKB-UniRule"/>
</dbReference>
<dbReference type="GO" id="GO:0016992">
    <property type="term" value="F:lipoate synthase activity"/>
    <property type="evidence" value="ECO:0007669"/>
    <property type="project" value="UniProtKB-UniRule"/>
</dbReference>
<dbReference type="GO" id="GO:0046872">
    <property type="term" value="F:metal ion binding"/>
    <property type="evidence" value="ECO:0007669"/>
    <property type="project" value="UniProtKB-KW"/>
</dbReference>
<dbReference type="CDD" id="cd01335">
    <property type="entry name" value="Radical_SAM"/>
    <property type="match status" value="1"/>
</dbReference>
<dbReference type="FunFam" id="3.20.20.70:FF:000186">
    <property type="entry name" value="Lipoyl synthase"/>
    <property type="match status" value="1"/>
</dbReference>
<dbReference type="Gene3D" id="3.20.20.70">
    <property type="entry name" value="Aldolase class I"/>
    <property type="match status" value="1"/>
</dbReference>
<dbReference type="HAMAP" id="MF_00206">
    <property type="entry name" value="Lipoyl_synth"/>
    <property type="match status" value="1"/>
</dbReference>
<dbReference type="InterPro" id="IPR013785">
    <property type="entry name" value="Aldolase_TIM"/>
</dbReference>
<dbReference type="InterPro" id="IPR006638">
    <property type="entry name" value="Elp3/MiaA/NifB-like_rSAM"/>
</dbReference>
<dbReference type="InterPro" id="IPR003698">
    <property type="entry name" value="Lipoyl_synth"/>
</dbReference>
<dbReference type="InterPro" id="IPR007197">
    <property type="entry name" value="rSAM"/>
</dbReference>
<dbReference type="NCBIfam" id="TIGR00510">
    <property type="entry name" value="lipA"/>
    <property type="match status" value="1"/>
</dbReference>
<dbReference type="NCBIfam" id="NF004019">
    <property type="entry name" value="PRK05481.1"/>
    <property type="match status" value="1"/>
</dbReference>
<dbReference type="NCBIfam" id="NF009544">
    <property type="entry name" value="PRK12928.1"/>
    <property type="match status" value="1"/>
</dbReference>
<dbReference type="PANTHER" id="PTHR10949">
    <property type="entry name" value="LIPOYL SYNTHASE"/>
    <property type="match status" value="1"/>
</dbReference>
<dbReference type="PANTHER" id="PTHR10949:SF0">
    <property type="entry name" value="LIPOYL SYNTHASE, MITOCHONDRIAL"/>
    <property type="match status" value="1"/>
</dbReference>
<dbReference type="Pfam" id="PF04055">
    <property type="entry name" value="Radical_SAM"/>
    <property type="match status" value="1"/>
</dbReference>
<dbReference type="PIRSF" id="PIRSF005963">
    <property type="entry name" value="Lipoyl_synth"/>
    <property type="match status" value="1"/>
</dbReference>
<dbReference type="SFLD" id="SFLDF00271">
    <property type="entry name" value="lipoyl_synthase"/>
    <property type="match status" value="1"/>
</dbReference>
<dbReference type="SFLD" id="SFLDS00029">
    <property type="entry name" value="Radical_SAM"/>
    <property type="match status" value="1"/>
</dbReference>
<dbReference type="SMART" id="SM00729">
    <property type="entry name" value="Elp3"/>
    <property type="match status" value="1"/>
</dbReference>
<dbReference type="SUPFAM" id="SSF102114">
    <property type="entry name" value="Radical SAM enzymes"/>
    <property type="match status" value="1"/>
</dbReference>
<dbReference type="PROSITE" id="PS51918">
    <property type="entry name" value="RADICAL_SAM"/>
    <property type="match status" value="1"/>
</dbReference>
<feature type="chain" id="PRO_0000102302" description="Lipoyl synthase">
    <location>
        <begin position="1"/>
        <end position="312"/>
    </location>
</feature>
<feature type="domain" description="Radical SAM core" evidence="2">
    <location>
        <begin position="63"/>
        <end position="280"/>
    </location>
</feature>
<feature type="binding site" evidence="1">
    <location>
        <position position="51"/>
    </location>
    <ligand>
        <name>[4Fe-4S] cluster</name>
        <dbReference type="ChEBI" id="CHEBI:49883"/>
        <label>1</label>
    </ligand>
</feature>
<feature type="binding site" evidence="1">
    <location>
        <position position="56"/>
    </location>
    <ligand>
        <name>[4Fe-4S] cluster</name>
        <dbReference type="ChEBI" id="CHEBI:49883"/>
        <label>1</label>
    </ligand>
</feature>
<feature type="binding site" evidence="1">
    <location>
        <position position="62"/>
    </location>
    <ligand>
        <name>[4Fe-4S] cluster</name>
        <dbReference type="ChEBI" id="CHEBI:49883"/>
        <label>1</label>
    </ligand>
</feature>
<feature type="binding site" evidence="1">
    <location>
        <position position="77"/>
    </location>
    <ligand>
        <name>[4Fe-4S] cluster</name>
        <dbReference type="ChEBI" id="CHEBI:49883"/>
        <label>2</label>
        <note>4Fe-4S-S-AdoMet</note>
    </ligand>
</feature>
<feature type="binding site" evidence="1">
    <location>
        <position position="81"/>
    </location>
    <ligand>
        <name>[4Fe-4S] cluster</name>
        <dbReference type="ChEBI" id="CHEBI:49883"/>
        <label>2</label>
        <note>4Fe-4S-S-AdoMet</note>
    </ligand>
</feature>
<feature type="binding site" evidence="1">
    <location>
        <position position="84"/>
    </location>
    <ligand>
        <name>[4Fe-4S] cluster</name>
        <dbReference type="ChEBI" id="CHEBI:49883"/>
        <label>2</label>
        <note>4Fe-4S-S-AdoMet</note>
    </ligand>
</feature>
<feature type="binding site" evidence="1">
    <location>
        <position position="290"/>
    </location>
    <ligand>
        <name>[4Fe-4S] cluster</name>
        <dbReference type="ChEBI" id="CHEBI:49883"/>
        <label>1</label>
    </ligand>
</feature>
<proteinExistence type="inferred from homology"/>
<accession>Q821K6</accession>
<protein>
    <recommendedName>
        <fullName evidence="1">Lipoyl synthase</fullName>
        <ecNumber evidence="1">2.8.1.8</ecNumber>
    </recommendedName>
    <alternativeName>
        <fullName evidence="1">Lip-syn</fullName>
        <shortName evidence="1">LS</shortName>
    </alternativeName>
    <alternativeName>
        <fullName evidence="1">Lipoate synthase</fullName>
    </alternativeName>
    <alternativeName>
        <fullName evidence="1">Lipoic acid synthase</fullName>
    </alternativeName>
    <alternativeName>
        <fullName evidence="1">Sulfur insertion protein LipA</fullName>
    </alternativeName>
</protein>
<organism>
    <name type="scientific">Chlamydia caviae (strain ATCC VR-813 / DSM 19441 / 03DC25 / GPIC)</name>
    <name type="common">Chlamydophila caviae</name>
    <dbReference type="NCBI Taxonomy" id="227941"/>
    <lineage>
        <taxon>Bacteria</taxon>
        <taxon>Pseudomonadati</taxon>
        <taxon>Chlamydiota</taxon>
        <taxon>Chlamydiia</taxon>
        <taxon>Chlamydiales</taxon>
        <taxon>Chlamydiaceae</taxon>
        <taxon>Chlamydia/Chlamydophila group</taxon>
        <taxon>Chlamydia</taxon>
    </lineage>
</organism>
<reference key="1">
    <citation type="journal article" date="2003" name="Nucleic Acids Res.">
        <title>Genome sequence of Chlamydophila caviae (Chlamydia psittaci GPIC): examining the role of niche-specific genes in the evolution of the Chlamydiaceae.</title>
        <authorList>
            <person name="Read T.D."/>
            <person name="Myers G.S.A."/>
            <person name="Brunham R.C."/>
            <person name="Nelson W.C."/>
            <person name="Paulsen I.T."/>
            <person name="Heidelberg J.F."/>
            <person name="Holtzapple E.K."/>
            <person name="Khouri H.M."/>
            <person name="Federova N.B."/>
            <person name="Carty H.A."/>
            <person name="Umayam L.A."/>
            <person name="Haft D.H."/>
            <person name="Peterson J.D."/>
            <person name="Beanan M.J."/>
            <person name="White O."/>
            <person name="Salzberg S.L."/>
            <person name="Hsia R.-C."/>
            <person name="McClarty G."/>
            <person name="Rank R.G."/>
            <person name="Bavoil P.M."/>
            <person name="Fraser C.M."/>
        </authorList>
    </citation>
    <scope>NUCLEOTIDE SEQUENCE [LARGE SCALE GENOMIC DNA]</scope>
    <source>
        <strain>ATCC VR-813 / DSM 19441 / 03DC25 / GPIC</strain>
    </source>
</reference>
<sequence>MNTPSDETRKPPQGKRFAERLPKWLRQVLPTGPVFAQTDTTIKRTGMATVCEEALCPNRACCWSRKTATYLALGDACTRRCGFCNIDFTKKPISPDPEEPQKIAESAKILQLKHIVLTMVARDDLEDGGASFLVRIIDTLHQELPESTVEVLASDFQGNIDALHTLLDSGLTIYNHNVETVERLTPVVRHKATYRRSLFMLEQAAMYLPDLKIKSGIMVGLGEQESEVKQTLKDLADHGVKIVTIGQYLRPSRSHIPVKSYVTPETFDYYRTIGTSLGLFVYAGPFVRSSFNADIVLHNLENKQSDVAKMQN</sequence>
<gene>
    <name evidence="1" type="primary">lipA</name>
    <name type="ordered locus">CCA_00934</name>
</gene>
<evidence type="ECO:0000255" key="1">
    <source>
        <dbReference type="HAMAP-Rule" id="MF_00206"/>
    </source>
</evidence>
<evidence type="ECO:0000255" key="2">
    <source>
        <dbReference type="PROSITE-ProRule" id="PRU01266"/>
    </source>
</evidence>
<comment type="function">
    <text evidence="1">Catalyzes the radical-mediated insertion of two sulfur atoms into the C-6 and C-8 positions of the octanoyl moiety bound to the lipoyl domains of lipoate-dependent enzymes, thereby converting the octanoylated domains into lipoylated derivatives.</text>
</comment>
<comment type="catalytic activity">
    <reaction evidence="1">
        <text>[[Fe-S] cluster scaffold protein carrying a second [4Fe-4S](2+) cluster] + N(6)-octanoyl-L-lysyl-[protein] + 2 oxidized [2Fe-2S]-[ferredoxin] + 2 S-adenosyl-L-methionine + 4 H(+) = [[Fe-S] cluster scaffold protein] + N(6)-[(R)-dihydrolipoyl]-L-lysyl-[protein] + 4 Fe(3+) + 2 hydrogen sulfide + 2 5'-deoxyadenosine + 2 L-methionine + 2 reduced [2Fe-2S]-[ferredoxin]</text>
        <dbReference type="Rhea" id="RHEA:16585"/>
        <dbReference type="Rhea" id="RHEA-COMP:9928"/>
        <dbReference type="Rhea" id="RHEA-COMP:10000"/>
        <dbReference type="Rhea" id="RHEA-COMP:10001"/>
        <dbReference type="Rhea" id="RHEA-COMP:10475"/>
        <dbReference type="Rhea" id="RHEA-COMP:14568"/>
        <dbReference type="Rhea" id="RHEA-COMP:14569"/>
        <dbReference type="ChEBI" id="CHEBI:15378"/>
        <dbReference type="ChEBI" id="CHEBI:17319"/>
        <dbReference type="ChEBI" id="CHEBI:29034"/>
        <dbReference type="ChEBI" id="CHEBI:29919"/>
        <dbReference type="ChEBI" id="CHEBI:33722"/>
        <dbReference type="ChEBI" id="CHEBI:33737"/>
        <dbReference type="ChEBI" id="CHEBI:33738"/>
        <dbReference type="ChEBI" id="CHEBI:57844"/>
        <dbReference type="ChEBI" id="CHEBI:59789"/>
        <dbReference type="ChEBI" id="CHEBI:78809"/>
        <dbReference type="ChEBI" id="CHEBI:83100"/>
        <dbReference type="EC" id="2.8.1.8"/>
    </reaction>
</comment>
<comment type="cofactor">
    <cofactor evidence="1">
        <name>[4Fe-4S] cluster</name>
        <dbReference type="ChEBI" id="CHEBI:49883"/>
    </cofactor>
    <text evidence="1">Binds 2 [4Fe-4S] clusters per subunit. One cluster is coordinated with 3 cysteines and an exchangeable S-adenosyl-L-methionine.</text>
</comment>
<comment type="pathway">
    <text evidence="1">Protein modification; protein lipoylation via endogenous pathway; protein N(6)-(lipoyl)lysine from octanoyl-[acyl-carrier-protein]: step 2/2.</text>
</comment>
<comment type="subcellular location">
    <subcellularLocation>
        <location evidence="1">Cytoplasm</location>
    </subcellularLocation>
</comment>
<comment type="similarity">
    <text evidence="1">Belongs to the radical SAM superfamily. Lipoyl synthase family.</text>
</comment>
<keyword id="KW-0004">4Fe-4S</keyword>
<keyword id="KW-0963">Cytoplasm</keyword>
<keyword id="KW-0408">Iron</keyword>
<keyword id="KW-0411">Iron-sulfur</keyword>
<keyword id="KW-0479">Metal-binding</keyword>
<keyword id="KW-0949">S-adenosyl-L-methionine</keyword>
<keyword id="KW-0808">Transferase</keyword>
<name>LIPA_CHLCV</name>